<keyword id="KW-1015">Disulfide bond</keyword>
<keyword id="KW-0244">Early protein</keyword>
<keyword id="KW-0325">Glycoprotein</keyword>
<keyword id="KW-1038">Host endoplasmic reticulum</keyword>
<keyword id="KW-1043">Host membrane</keyword>
<keyword id="KW-0945">Host-virus interaction</keyword>
<keyword id="KW-0426">Late protein</keyword>
<keyword id="KW-0430">Lectin</keyword>
<keyword id="KW-0472">Membrane</keyword>
<keyword id="KW-1119">Modulation of host cell apoptosis by virus</keyword>
<keyword id="KW-0735">Signal-anchor</keyword>
<keyword id="KW-0812">Transmembrane</keyword>
<keyword id="KW-1133">Transmembrane helix</keyword>
<protein>
    <recommendedName>
        <fullName>Lectin-like protein EP153R</fullName>
        <shortName>pEP153R</shortName>
    </recommendedName>
</protein>
<comment type="function">
    <text evidence="1 3">Down-regulates MHC-I expression by impairing the appropriate configuration or presentation into the plasma membrane of the latter (By similarity). Participates in viral hemadsorption, which may help viral spread (By similarity). Reduces the transactivating activity of host TP53, thus inhibiting apoptosis (By similarity). Non-essential for virus growth in swine macrophage cell cultures (PubMed:10573162).</text>
</comment>
<comment type="subunit">
    <text evidence="1">Homodimer.</text>
</comment>
<comment type="subcellular location">
    <subcellularLocation>
        <location evidence="1">Host endoplasmic reticulum membrane</location>
        <topology evidence="1">Single-pass type II membrane protein</topology>
    </subcellularLocation>
</comment>
<comment type="induction">
    <text evidence="1">Expressed in the early phase of the viral replicative cycle (By similarity). Expressed in the late phase of the viral replicative cycle (By similarity).</text>
</comment>
<comment type="similarity">
    <text evidence="4">Belongs to the asfivirus lectin-like protein family.</text>
</comment>
<accession>O89335</accession>
<evidence type="ECO:0000250" key="1">
    <source>
        <dbReference type="UniProtKB" id="Q65150"/>
    </source>
</evidence>
<evidence type="ECO:0000255" key="2"/>
<evidence type="ECO:0000269" key="3">
    <source>
    </source>
</evidence>
<evidence type="ECO:0000305" key="4"/>
<name>EP153_ASFP4</name>
<sequence>MYFKKKYIGLIDKNCEKKILDDCTTIKICYILIGILIGTNMITLIYNFIFWDHYMTCNKKDKMFYCPKDWVGYNNVCYYFNNDSKNYTTATNSCKQLNSTLANNDTNLLNLTKVYHHDKLYWVNYSLNDNFSLSLRNSTYEKRSKYLPLLFICSK</sequence>
<gene>
    <name type="ordered locus">Pret-069</name>
</gene>
<reference key="1">
    <citation type="journal article" date="1999" name="J. Gen. Virol.">
        <title>An African swine fever virus ORF with similarity to C-type lectins is non-essential for growth in swine macrophages in vitro and for virus virulence in domestic swine.</title>
        <authorList>
            <person name="Neilan J.G."/>
            <person name="Borca M.V."/>
            <person name="Lu Z."/>
            <person name="Kutish G.F."/>
            <person name="Kleiboeker S.B."/>
            <person name="Carrillo C."/>
            <person name="Zsak L."/>
            <person name="Rock D.L."/>
        </authorList>
    </citation>
    <scope>NUCLEOTIDE SEQUENCE [GENOMIC DNA]</scope>
</reference>
<reference key="2">
    <citation type="submission" date="1998-02" db="EMBL/GenBank/DDBJ databases">
        <title>The African swine fever virus C-type lectin (8CR) or CD2 (8DR) like genes are nonessential for infection and persistence in the tick host.</title>
        <authorList>
            <person name="Scoles G.A."/>
            <person name="Kleiboeker S.B."/>
            <person name="Lu Z."/>
            <person name="Kutish G.F."/>
            <person name="Rock D.L."/>
        </authorList>
    </citation>
    <scope>NUCLEOTIDE SEQUENCE [GENOMIC DNA]</scope>
</reference>
<reference key="3">
    <citation type="submission" date="2003-03" db="EMBL/GenBank/DDBJ databases">
        <title>African swine fever virus genomes.</title>
        <authorList>
            <person name="Kutish G.F."/>
            <person name="Rock D.L."/>
        </authorList>
    </citation>
    <scope>NUCLEOTIDE SEQUENCE [LARGE SCALE GENOMIC DNA]</scope>
</reference>
<proteinExistence type="inferred from homology"/>
<organismHost>
    <name type="scientific">Ornithodoros</name>
    <name type="common">relapsing fever ticks</name>
    <dbReference type="NCBI Taxonomy" id="6937"/>
</organismHost>
<organismHost>
    <name type="scientific">Phacochoerus aethiopicus</name>
    <name type="common">Warthog</name>
    <dbReference type="NCBI Taxonomy" id="85517"/>
</organismHost>
<organismHost>
    <name type="scientific">Phacochoerus africanus</name>
    <name type="common">Warthog</name>
    <dbReference type="NCBI Taxonomy" id="41426"/>
</organismHost>
<organismHost>
    <name type="scientific">Potamochoerus larvatus</name>
    <name type="common">Bushpig</name>
    <dbReference type="NCBI Taxonomy" id="273792"/>
</organismHost>
<organismHost>
    <name type="scientific">Sus scrofa</name>
    <name type="common">Pig</name>
    <dbReference type="NCBI Taxonomy" id="9823"/>
</organismHost>
<dbReference type="EMBL" id="AY261363">
    <property type="status" value="NOT_ANNOTATED_CDS"/>
    <property type="molecule type" value="Genomic_DNA"/>
</dbReference>
<dbReference type="EMBL" id="AF017036">
    <property type="protein sequence ID" value="AAC28421.1"/>
    <property type="molecule type" value="Genomic_DNA"/>
</dbReference>
<dbReference type="EMBL" id="AF050111">
    <property type="protein sequence ID" value="AAF24969.1"/>
    <property type="molecule type" value="Genomic_DNA"/>
</dbReference>
<dbReference type="SMR" id="O89335"/>
<dbReference type="Proteomes" id="UP000000859">
    <property type="component" value="Segment"/>
</dbReference>
<dbReference type="GO" id="GO:0044167">
    <property type="term" value="C:host cell endoplasmic reticulum membrane"/>
    <property type="evidence" value="ECO:0007669"/>
    <property type="project" value="UniProtKB-SubCell"/>
</dbReference>
<dbReference type="GO" id="GO:0016020">
    <property type="term" value="C:membrane"/>
    <property type="evidence" value="ECO:0007669"/>
    <property type="project" value="UniProtKB-KW"/>
</dbReference>
<dbReference type="GO" id="GO:0030246">
    <property type="term" value="F:carbohydrate binding"/>
    <property type="evidence" value="ECO:0007669"/>
    <property type="project" value="UniProtKB-KW"/>
</dbReference>
<dbReference type="GO" id="GO:0052150">
    <property type="term" value="P:symbiont-mediated perturbation of host apoptosis"/>
    <property type="evidence" value="ECO:0007669"/>
    <property type="project" value="UniProtKB-KW"/>
</dbReference>
<dbReference type="Gene3D" id="3.10.100.10">
    <property type="entry name" value="Mannose-Binding Protein A, subunit A"/>
    <property type="match status" value="1"/>
</dbReference>
<dbReference type="InterPro" id="IPR016186">
    <property type="entry name" value="C-type_lectin-like/link_sf"/>
</dbReference>
<dbReference type="InterPro" id="IPR016187">
    <property type="entry name" value="CTDL_fold"/>
</dbReference>
<dbReference type="Pfam" id="PF05473">
    <property type="entry name" value="UL45"/>
    <property type="match status" value="1"/>
</dbReference>
<dbReference type="SUPFAM" id="SSF56436">
    <property type="entry name" value="C-type lectin-like"/>
    <property type="match status" value="1"/>
</dbReference>
<organism>
    <name type="scientific">African swine fever virus (isolate Tick/South Africa/Pretoriuskop Pr4/1996)</name>
    <name type="common">ASFV</name>
    <dbReference type="NCBI Taxonomy" id="561443"/>
    <lineage>
        <taxon>Viruses</taxon>
        <taxon>Varidnaviria</taxon>
        <taxon>Bamfordvirae</taxon>
        <taxon>Nucleocytoviricota</taxon>
        <taxon>Pokkesviricetes</taxon>
        <taxon>Asfuvirales</taxon>
        <taxon>Asfarviridae</taxon>
        <taxon>Asfivirus</taxon>
        <taxon>African swine fever virus</taxon>
    </lineage>
</organism>
<feature type="chain" id="PRO_0000373541" description="Lectin-like protein EP153R">
    <location>
        <begin position="1"/>
        <end position="155"/>
    </location>
</feature>
<feature type="topological domain" description="Cytoplasmic" evidence="1">
    <location>
        <begin position="1"/>
        <end position="30"/>
    </location>
</feature>
<feature type="transmembrane region" description="Helical" evidence="2">
    <location>
        <begin position="31"/>
        <end position="51"/>
    </location>
</feature>
<feature type="topological domain" description="Extracellular" evidence="1">
    <location>
        <begin position="52"/>
        <end position="155"/>
    </location>
</feature>
<feature type="region of interest" description="Lectin-like">
    <location>
        <begin position="66"/>
        <end position="154"/>
    </location>
</feature>
<feature type="glycosylation site" description="N-linked (GlcNAc...) asparagine; by host" evidence="2">
    <location>
        <position position="82"/>
    </location>
</feature>
<feature type="glycosylation site" description="N-linked (GlcNAc...) asparagine; by host" evidence="2">
    <location>
        <position position="86"/>
    </location>
</feature>
<feature type="glycosylation site" description="N-linked (GlcNAc...) asparagine; by host" evidence="2">
    <location>
        <position position="98"/>
    </location>
</feature>
<feature type="glycosylation site" description="N-linked (GlcNAc...) asparagine; by host" evidence="2">
    <location>
        <position position="104"/>
    </location>
</feature>
<feature type="glycosylation site" description="N-linked (GlcNAc...) asparagine; by host" evidence="2">
    <location>
        <position position="110"/>
    </location>
</feature>
<feature type="glycosylation site" description="N-linked (GlcNAc...) asparagine; by host" evidence="2">
    <location>
        <position position="124"/>
    </location>
</feature>
<feature type="glycosylation site" description="N-linked (GlcNAc...) asparagine; by host" evidence="2">
    <location>
        <position position="130"/>
    </location>
</feature>
<feature type="glycosylation site" description="N-linked (GlcNAc...) asparagine; by host" evidence="2">
    <location>
        <position position="137"/>
    </location>
</feature>
<feature type="disulfide bond" evidence="1">
    <location>
        <begin position="66"/>
        <end position="77"/>
    </location>
</feature>
<feature type="disulfide bond" evidence="1">
    <location>
        <begin position="94"/>
        <end position="153"/>
    </location>
</feature>